<organism>
    <name type="scientific">Arabidopsis thaliana</name>
    <name type="common">Mouse-ear cress</name>
    <dbReference type="NCBI Taxonomy" id="3702"/>
    <lineage>
        <taxon>Eukaryota</taxon>
        <taxon>Viridiplantae</taxon>
        <taxon>Streptophyta</taxon>
        <taxon>Embryophyta</taxon>
        <taxon>Tracheophyta</taxon>
        <taxon>Spermatophyta</taxon>
        <taxon>Magnoliopsida</taxon>
        <taxon>eudicotyledons</taxon>
        <taxon>Gunneridae</taxon>
        <taxon>Pentapetalae</taxon>
        <taxon>rosids</taxon>
        <taxon>malvids</taxon>
        <taxon>Brassicales</taxon>
        <taxon>Brassicaceae</taxon>
        <taxon>Camelineae</taxon>
        <taxon>Arabidopsis</taxon>
    </lineage>
</organism>
<keyword id="KW-0112">Calmodulin-binding</keyword>
<keyword id="KW-1003">Cell membrane</keyword>
<keyword id="KW-0472">Membrane</keyword>
<keyword id="KW-0568">Pathogenesis-related protein</keyword>
<keyword id="KW-0611">Plant defense</keyword>
<keyword id="KW-1185">Reference proteome</keyword>
<keyword id="KW-0812">Transmembrane</keyword>
<keyword id="KW-1133">Transmembrane helix</keyword>
<feature type="chain" id="PRO_0000209931" description="MLO-like protein 1">
    <location>
        <begin position="1"/>
        <end position="526"/>
    </location>
</feature>
<feature type="topological domain" description="Extracellular" evidence="2">
    <location>
        <begin position="1"/>
        <end position="11"/>
    </location>
</feature>
<feature type="transmembrane region" description="Helical; Name=1" evidence="2">
    <location>
        <begin position="12"/>
        <end position="32"/>
    </location>
</feature>
<feature type="topological domain" description="Cytoplasmic" evidence="2">
    <location>
        <begin position="33"/>
        <end position="61"/>
    </location>
</feature>
<feature type="transmembrane region" description="Helical; Name=2" evidence="2">
    <location>
        <begin position="62"/>
        <end position="82"/>
    </location>
</feature>
<feature type="topological domain" description="Extracellular" evidence="2">
    <location>
        <begin position="83"/>
        <end position="160"/>
    </location>
</feature>
<feature type="transmembrane region" description="Helical; Name=3" evidence="2">
    <location>
        <begin position="161"/>
        <end position="181"/>
    </location>
</feature>
<feature type="topological domain" description="Cytoplasmic" evidence="2">
    <location>
        <begin position="182"/>
        <end position="287"/>
    </location>
</feature>
<feature type="transmembrane region" description="Helical; Name=4" evidence="2">
    <location>
        <begin position="288"/>
        <end position="308"/>
    </location>
</feature>
<feature type="transmembrane region" description="Helical; Name=5" evidence="2">
    <location>
        <begin position="309"/>
        <end position="329"/>
    </location>
</feature>
<feature type="topological domain" description="Cytoplasmic" evidence="2">
    <location>
        <begin position="330"/>
        <end position="372"/>
    </location>
</feature>
<feature type="transmembrane region" description="Helical; Name=6" evidence="2">
    <location>
        <begin position="373"/>
        <end position="393"/>
    </location>
</feature>
<feature type="topological domain" description="Extracellular" evidence="2">
    <location>
        <begin position="394"/>
        <end position="412"/>
    </location>
</feature>
<feature type="transmembrane region" description="Helical; Name=7" evidence="2">
    <location>
        <begin position="413"/>
        <end position="433"/>
    </location>
</feature>
<feature type="topological domain" description="Cytoplasmic" evidence="2">
    <location>
        <begin position="434"/>
        <end position="526"/>
    </location>
</feature>
<feature type="region of interest" description="Calmodulin-binding">
    <location>
        <begin position="447"/>
        <end position="468"/>
    </location>
</feature>
<feature type="region of interest" description="Disordered" evidence="3">
    <location>
        <begin position="471"/>
        <end position="526"/>
    </location>
</feature>
<feature type="compositionally biased region" description="Low complexity" evidence="3">
    <location>
        <begin position="476"/>
        <end position="495"/>
    </location>
</feature>
<feature type="compositionally biased region" description="Polar residues" evidence="3">
    <location>
        <begin position="506"/>
        <end position="520"/>
    </location>
</feature>
<feature type="mutagenesis site" description="Disturbs binding to calmodulin; when associated with R-456." evidence="4">
    <original>L</original>
    <variation>R</variation>
    <location>
        <position position="453"/>
    </location>
</feature>
<feature type="mutagenesis site" description="Disturbs binding to calmodulin; when associated with R-453." evidence="4">
    <original>W</original>
    <variation>R</variation>
    <location>
        <position position="456"/>
    </location>
</feature>
<accession>O49621</accession>
<accession>O22766</accession>
<gene>
    <name type="primary">MLO1</name>
    <name type="synonym">MLO-H1</name>
    <name type="ordered locus">At4g02600</name>
    <name type="ORF">T10P11.12</name>
</gene>
<comment type="function">
    <text evidence="1">May be involved in modulation of pathogen defense and leaf cell death. Activity seems to be regulated by Ca(2+)-dependent calmodulin binding and seems not to require heterotrimeric G proteins (By similarity).</text>
</comment>
<comment type="subcellular location">
    <subcellularLocation>
        <location evidence="5">Cell membrane</location>
        <topology evidence="2">Multi-pass membrane protein</topology>
    </subcellularLocation>
</comment>
<comment type="domain">
    <text>The C-terminus contains a calmodulin-binding domain, which binds calmodulin in a calcium-dependent fashion.</text>
</comment>
<comment type="similarity">
    <text evidence="6">Belongs to the MLO family.</text>
</comment>
<proteinExistence type="evidence at protein level"/>
<protein>
    <recommendedName>
        <fullName>MLO-like protein 1</fullName>
        <shortName>AtMlo1</shortName>
    </recommendedName>
    <alternativeName>
        <fullName>MLO protein homolog 1</fullName>
        <shortName>AtMlo-H1</shortName>
    </alternativeName>
</protein>
<evidence type="ECO:0000250" key="1"/>
<evidence type="ECO:0000255" key="2"/>
<evidence type="ECO:0000256" key="3">
    <source>
        <dbReference type="SAM" id="MobiDB-lite"/>
    </source>
</evidence>
<evidence type="ECO:0000269" key="4">
    <source>
    </source>
</evidence>
<evidence type="ECO:0000269" key="5">
    <source>
    </source>
</evidence>
<evidence type="ECO:0000305" key="6"/>
<name>MLO1_ARATH</name>
<dbReference type="EMBL" id="Z95352">
    <property type="protein sequence ID" value="CAB08605.1"/>
    <property type="molecule type" value="mRNA"/>
</dbReference>
<dbReference type="EMBL" id="AC002330">
    <property type="protein sequence ID" value="AAC78258.1"/>
    <property type="molecule type" value="Genomic_DNA"/>
</dbReference>
<dbReference type="EMBL" id="AL161494">
    <property type="protein sequence ID" value="CAB80753.1"/>
    <property type="molecule type" value="Genomic_DNA"/>
</dbReference>
<dbReference type="EMBL" id="CP002687">
    <property type="protein sequence ID" value="AEE82202.1"/>
    <property type="molecule type" value="Genomic_DNA"/>
</dbReference>
<dbReference type="EMBL" id="CP002687">
    <property type="protein sequence ID" value="AEE82203.1"/>
    <property type="molecule type" value="Genomic_DNA"/>
</dbReference>
<dbReference type="EMBL" id="AY072135">
    <property type="protein sequence ID" value="AAL59957.1"/>
    <property type="molecule type" value="mRNA"/>
</dbReference>
<dbReference type="EMBL" id="AY113992">
    <property type="protein sequence ID" value="AAM45040.1"/>
    <property type="molecule type" value="mRNA"/>
</dbReference>
<dbReference type="PIR" id="T01089">
    <property type="entry name" value="T01089"/>
</dbReference>
<dbReference type="RefSeq" id="NP_001031578.1">
    <property type="nucleotide sequence ID" value="NM_001036501.2"/>
</dbReference>
<dbReference type="RefSeq" id="NP_192169.1">
    <property type="nucleotide sequence ID" value="NM_116494.5"/>
</dbReference>
<dbReference type="SMR" id="O49621"/>
<dbReference type="BioGRID" id="13518">
    <property type="interactions" value="1"/>
</dbReference>
<dbReference type="FunCoup" id="O49621">
    <property type="interactions" value="1020"/>
</dbReference>
<dbReference type="STRING" id="3702.O49621"/>
<dbReference type="iPTMnet" id="O49621"/>
<dbReference type="PaxDb" id="3702-AT4G02600.1"/>
<dbReference type="ProteomicsDB" id="238896"/>
<dbReference type="EnsemblPlants" id="AT4G02600.1">
    <property type="protein sequence ID" value="AT4G02600.1"/>
    <property type="gene ID" value="AT4G02600"/>
</dbReference>
<dbReference type="EnsemblPlants" id="AT4G02600.2">
    <property type="protein sequence ID" value="AT4G02600.2"/>
    <property type="gene ID" value="AT4G02600"/>
</dbReference>
<dbReference type="GeneID" id="828229"/>
<dbReference type="Gramene" id="AT4G02600.1">
    <property type="protein sequence ID" value="AT4G02600.1"/>
    <property type="gene ID" value="AT4G02600"/>
</dbReference>
<dbReference type="Gramene" id="AT4G02600.2">
    <property type="protein sequence ID" value="AT4G02600.2"/>
    <property type="gene ID" value="AT4G02600"/>
</dbReference>
<dbReference type="KEGG" id="ath:AT4G02600"/>
<dbReference type="Araport" id="AT4G02600"/>
<dbReference type="TAIR" id="AT4G02600">
    <property type="gene designation" value="MLO1"/>
</dbReference>
<dbReference type="eggNOG" id="KOG0017">
    <property type="taxonomic scope" value="Eukaryota"/>
</dbReference>
<dbReference type="HOGENOM" id="CLU_024720_3_0_1"/>
<dbReference type="InParanoid" id="O49621"/>
<dbReference type="OMA" id="CSKHEAE"/>
<dbReference type="PhylomeDB" id="O49621"/>
<dbReference type="PRO" id="PR:O49621"/>
<dbReference type="Proteomes" id="UP000006548">
    <property type="component" value="Chromosome 4"/>
</dbReference>
<dbReference type="ExpressionAtlas" id="O49621">
    <property type="expression patterns" value="baseline and differential"/>
</dbReference>
<dbReference type="GO" id="GO:0005886">
    <property type="term" value="C:plasma membrane"/>
    <property type="evidence" value="ECO:0007005"/>
    <property type="project" value="TAIR"/>
</dbReference>
<dbReference type="GO" id="GO:0005516">
    <property type="term" value="F:calmodulin binding"/>
    <property type="evidence" value="ECO:0007669"/>
    <property type="project" value="UniProtKB-KW"/>
</dbReference>
<dbReference type="GO" id="GO:0006952">
    <property type="term" value="P:defense response"/>
    <property type="evidence" value="ECO:0007669"/>
    <property type="project" value="UniProtKB-KW"/>
</dbReference>
<dbReference type="InterPro" id="IPR004326">
    <property type="entry name" value="Mlo"/>
</dbReference>
<dbReference type="PANTHER" id="PTHR31942">
    <property type="entry name" value="MLO-LIKE PROTEIN 1"/>
    <property type="match status" value="1"/>
</dbReference>
<dbReference type="PANTHER" id="PTHR31942:SF52">
    <property type="entry name" value="MLO-LIKE PROTEIN 1"/>
    <property type="match status" value="1"/>
</dbReference>
<dbReference type="Pfam" id="PF03094">
    <property type="entry name" value="Mlo"/>
    <property type="match status" value="1"/>
</dbReference>
<sequence>MGHGGEGMSLEFTPTWVVAGVCTVIVAISLAVERLLHYFGTVLKKKKQKPLYEALQKVKEELMLLGFISLLLTVFQGLISKFCVKENVLMHMLPCSLDSRREAGASEHKNVTAKEHFQTFLPIVGTTRRLLAEHAAVQVGYCSEKGKVPLLSLEALHHLHIFIFVLAISHVTFCVLTVIFGSTRIHQWKKWEDSIADEKFDPETALRKRRVTHVHNHAFIKEHFLGIGKDSVILGWTQSFLKQFYDSVTKSDYVTLRLGFIMTHCKGNPKLNFHKYMMRALEDDFKQVVGISWYLWIFVVIFLLLNVNGWHTYFWIAFIPFALLLAVGTKLEHVIAQLAHEVAEKHVAIEGDLVVKPSDEHFWFSKPQIVLYLIHFILFQNAFEIAFFFWIWVTYGFDSCIMGQVRYIVPRLVIGVFIQVLCSYSTLPLYAIVSQMGSSFKKAIFEENVQVGLVGWAQKVKQKRDLKAAASNGDEGSSQAGPGPDSGSGSAPAAGPGAGFAGIQLSRVTRNNAGDTNNEITPDHNN</sequence>
<reference key="1">
    <citation type="submission" date="1997-05" db="EMBL/GenBank/DDBJ databases">
        <authorList>
            <person name="Panstruga R."/>
        </authorList>
    </citation>
    <scope>NUCLEOTIDE SEQUENCE [MRNA]</scope>
</reference>
<reference key="2">
    <citation type="journal article" date="1999" name="Nature">
        <title>Sequence and analysis of chromosome 4 of the plant Arabidopsis thaliana.</title>
        <authorList>
            <person name="Mayer K.F.X."/>
            <person name="Schueller C."/>
            <person name="Wambutt R."/>
            <person name="Murphy G."/>
            <person name="Volckaert G."/>
            <person name="Pohl T."/>
            <person name="Duesterhoeft A."/>
            <person name="Stiekema W."/>
            <person name="Entian K.-D."/>
            <person name="Terryn N."/>
            <person name="Harris B."/>
            <person name="Ansorge W."/>
            <person name="Brandt P."/>
            <person name="Grivell L.A."/>
            <person name="Rieger M."/>
            <person name="Weichselgartner M."/>
            <person name="de Simone V."/>
            <person name="Obermaier B."/>
            <person name="Mache R."/>
            <person name="Mueller M."/>
            <person name="Kreis M."/>
            <person name="Delseny M."/>
            <person name="Puigdomenech P."/>
            <person name="Watson M."/>
            <person name="Schmidtheini T."/>
            <person name="Reichert B."/>
            <person name="Portetelle D."/>
            <person name="Perez-Alonso M."/>
            <person name="Boutry M."/>
            <person name="Bancroft I."/>
            <person name="Vos P."/>
            <person name="Hoheisel J."/>
            <person name="Zimmermann W."/>
            <person name="Wedler H."/>
            <person name="Ridley P."/>
            <person name="Langham S.-A."/>
            <person name="McCullagh B."/>
            <person name="Bilham L."/>
            <person name="Robben J."/>
            <person name="van der Schueren J."/>
            <person name="Grymonprez B."/>
            <person name="Chuang Y.-J."/>
            <person name="Vandenbussche F."/>
            <person name="Braeken M."/>
            <person name="Weltjens I."/>
            <person name="Voet M."/>
            <person name="Bastiaens I."/>
            <person name="Aert R."/>
            <person name="Defoor E."/>
            <person name="Weitzenegger T."/>
            <person name="Bothe G."/>
            <person name="Ramsperger U."/>
            <person name="Hilbert H."/>
            <person name="Braun M."/>
            <person name="Holzer E."/>
            <person name="Brandt A."/>
            <person name="Peters S."/>
            <person name="van Staveren M."/>
            <person name="Dirkse W."/>
            <person name="Mooijman P."/>
            <person name="Klein Lankhorst R."/>
            <person name="Rose M."/>
            <person name="Hauf J."/>
            <person name="Koetter P."/>
            <person name="Berneiser S."/>
            <person name="Hempel S."/>
            <person name="Feldpausch M."/>
            <person name="Lamberth S."/>
            <person name="Van den Daele H."/>
            <person name="De Keyser A."/>
            <person name="Buysshaert C."/>
            <person name="Gielen J."/>
            <person name="Villarroel R."/>
            <person name="De Clercq R."/>
            <person name="van Montagu M."/>
            <person name="Rogers J."/>
            <person name="Cronin A."/>
            <person name="Quail M.A."/>
            <person name="Bray-Allen S."/>
            <person name="Clark L."/>
            <person name="Doggett J."/>
            <person name="Hall S."/>
            <person name="Kay M."/>
            <person name="Lennard N."/>
            <person name="McLay K."/>
            <person name="Mayes R."/>
            <person name="Pettett A."/>
            <person name="Rajandream M.A."/>
            <person name="Lyne M."/>
            <person name="Benes V."/>
            <person name="Rechmann S."/>
            <person name="Borkova D."/>
            <person name="Bloecker H."/>
            <person name="Scharfe M."/>
            <person name="Grimm M."/>
            <person name="Loehnert T.-H."/>
            <person name="Dose S."/>
            <person name="de Haan M."/>
            <person name="Maarse A.C."/>
            <person name="Schaefer M."/>
            <person name="Mueller-Auer S."/>
            <person name="Gabel C."/>
            <person name="Fuchs M."/>
            <person name="Fartmann B."/>
            <person name="Granderath K."/>
            <person name="Dauner D."/>
            <person name="Herzl A."/>
            <person name="Neumann S."/>
            <person name="Argiriou A."/>
            <person name="Vitale D."/>
            <person name="Liguori R."/>
            <person name="Piravandi E."/>
            <person name="Massenet O."/>
            <person name="Quigley F."/>
            <person name="Clabauld G."/>
            <person name="Muendlein A."/>
            <person name="Felber R."/>
            <person name="Schnabl S."/>
            <person name="Hiller R."/>
            <person name="Schmidt W."/>
            <person name="Lecharny A."/>
            <person name="Aubourg S."/>
            <person name="Chefdor F."/>
            <person name="Cooke R."/>
            <person name="Berger C."/>
            <person name="Monfort A."/>
            <person name="Casacuberta E."/>
            <person name="Gibbons T."/>
            <person name="Weber N."/>
            <person name="Vandenbol M."/>
            <person name="Bargues M."/>
            <person name="Terol J."/>
            <person name="Torres A."/>
            <person name="Perez-Perez A."/>
            <person name="Purnelle B."/>
            <person name="Bent E."/>
            <person name="Johnson S."/>
            <person name="Tacon D."/>
            <person name="Jesse T."/>
            <person name="Heijnen L."/>
            <person name="Schwarz S."/>
            <person name="Scholler P."/>
            <person name="Heber S."/>
            <person name="Francs P."/>
            <person name="Bielke C."/>
            <person name="Frishman D."/>
            <person name="Haase D."/>
            <person name="Lemcke K."/>
            <person name="Mewes H.-W."/>
            <person name="Stocker S."/>
            <person name="Zaccaria P."/>
            <person name="Bevan M."/>
            <person name="Wilson R.K."/>
            <person name="de la Bastide M."/>
            <person name="Habermann K."/>
            <person name="Parnell L."/>
            <person name="Dedhia N."/>
            <person name="Gnoj L."/>
            <person name="Schutz K."/>
            <person name="Huang E."/>
            <person name="Spiegel L."/>
            <person name="Sekhon M."/>
            <person name="Murray J."/>
            <person name="Sheet P."/>
            <person name="Cordes M."/>
            <person name="Abu-Threideh J."/>
            <person name="Stoneking T."/>
            <person name="Kalicki J."/>
            <person name="Graves T."/>
            <person name="Harmon G."/>
            <person name="Edwards J."/>
            <person name="Latreille P."/>
            <person name="Courtney L."/>
            <person name="Cloud J."/>
            <person name="Abbott A."/>
            <person name="Scott K."/>
            <person name="Johnson D."/>
            <person name="Minx P."/>
            <person name="Bentley D."/>
            <person name="Fulton B."/>
            <person name="Miller N."/>
            <person name="Greco T."/>
            <person name="Kemp K."/>
            <person name="Kramer J."/>
            <person name="Fulton L."/>
            <person name="Mardis E."/>
            <person name="Dante M."/>
            <person name="Pepin K."/>
            <person name="Hillier L.W."/>
            <person name="Nelson J."/>
            <person name="Spieth J."/>
            <person name="Ryan E."/>
            <person name="Andrews S."/>
            <person name="Geisel C."/>
            <person name="Layman D."/>
            <person name="Du H."/>
            <person name="Ali J."/>
            <person name="Berghoff A."/>
            <person name="Jones K."/>
            <person name="Drone K."/>
            <person name="Cotton M."/>
            <person name="Joshu C."/>
            <person name="Antonoiu B."/>
            <person name="Zidanic M."/>
            <person name="Strong C."/>
            <person name="Sun H."/>
            <person name="Lamar B."/>
            <person name="Yordan C."/>
            <person name="Ma P."/>
            <person name="Zhong J."/>
            <person name="Preston R."/>
            <person name="Vil D."/>
            <person name="Shekher M."/>
            <person name="Matero A."/>
            <person name="Shah R."/>
            <person name="Swaby I.K."/>
            <person name="O'Shaughnessy A."/>
            <person name="Rodriguez M."/>
            <person name="Hoffman J."/>
            <person name="Till S."/>
            <person name="Granat S."/>
            <person name="Shohdy N."/>
            <person name="Hasegawa A."/>
            <person name="Hameed A."/>
            <person name="Lodhi M."/>
            <person name="Johnson A."/>
            <person name="Chen E."/>
            <person name="Marra M.A."/>
            <person name="Martienssen R."/>
            <person name="McCombie W.R."/>
        </authorList>
    </citation>
    <scope>NUCLEOTIDE SEQUENCE [LARGE SCALE GENOMIC DNA]</scope>
    <source>
        <strain>cv. Columbia</strain>
    </source>
</reference>
<reference key="3">
    <citation type="journal article" date="2017" name="Plant J.">
        <title>Araport11: a complete reannotation of the Arabidopsis thaliana reference genome.</title>
        <authorList>
            <person name="Cheng C.Y."/>
            <person name="Krishnakumar V."/>
            <person name="Chan A.P."/>
            <person name="Thibaud-Nissen F."/>
            <person name="Schobel S."/>
            <person name="Town C.D."/>
        </authorList>
    </citation>
    <scope>GENOME REANNOTATION</scope>
    <source>
        <strain>cv. Columbia</strain>
    </source>
</reference>
<reference key="4">
    <citation type="journal article" date="2003" name="Science">
        <title>Empirical analysis of transcriptional activity in the Arabidopsis genome.</title>
        <authorList>
            <person name="Yamada K."/>
            <person name="Lim J."/>
            <person name="Dale J.M."/>
            <person name="Chen H."/>
            <person name="Shinn P."/>
            <person name="Palm C.J."/>
            <person name="Southwick A.M."/>
            <person name="Wu H.C."/>
            <person name="Kim C.J."/>
            <person name="Nguyen M."/>
            <person name="Pham P.K."/>
            <person name="Cheuk R.F."/>
            <person name="Karlin-Newmann G."/>
            <person name="Liu S.X."/>
            <person name="Lam B."/>
            <person name="Sakano H."/>
            <person name="Wu T."/>
            <person name="Yu G."/>
            <person name="Miranda M."/>
            <person name="Quach H.L."/>
            <person name="Tripp M."/>
            <person name="Chang C.H."/>
            <person name="Lee J.M."/>
            <person name="Toriumi M.J."/>
            <person name="Chan M.M."/>
            <person name="Tang C.C."/>
            <person name="Onodera C.S."/>
            <person name="Deng J.M."/>
            <person name="Akiyama K."/>
            <person name="Ansari Y."/>
            <person name="Arakawa T."/>
            <person name="Banh J."/>
            <person name="Banno F."/>
            <person name="Bowser L."/>
            <person name="Brooks S.Y."/>
            <person name="Carninci P."/>
            <person name="Chao Q."/>
            <person name="Choy N."/>
            <person name="Enju A."/>
            <person name="Goldsmith A.D."/>
            <person name="Gurjal M."/>
            <person name="Hansen N.F."/>
            <person name="Hayashizaki Y."/>
            <person name="Johnson-Hopson C."/>
            <person name="Hsuan V.W."/>
            <person name="Iida K."/>
            <person name="Karnes M."/>
            <person name="Khan S."/>
            <person name="Koesema E."/>
            <person name="Ishida J."/>
            <person name="Jiang P.X."/>
            <person name="Jones T."/>
            <person name="Kawai J."/>
            <person name="Kamiya A."/>
            <person name="Meyers C."/>
            <person name="Nakajima M."/>
            <person name="Narusaka M."/>
            <person name="Seki M."/>
            <person name="Sakurai T."/>
            <person name="Satou M."/>
            <person name="Tamse R."/>
            <person name="Vaysberg M."/>
            <person name="Wallender E.K."/>
            <person name="Wong C."/>
            <person name="Yamamura Y."/>
            <person name="Yuan S."/>
            <person name="Shinozaki K."/>
            <person name="Davis R.W."/>
            <person name="Theologis A."/>
            <person name="Ecker J.R."/>
        </authorList>
    </citation>
    <scope>NUCLEOTIDE SEQUENCE [LARGE SCALE MRNA]</scope>
    <source>
        <strain>cv. Columbia</strain>
    </source>
</reference>
<reference key="5">
    <citation type="journal article" date="2002" name="Nature">
        <title>Calmodulin interacts with MLO protein to regulate defence against mildew in barley.</title>
        <authorList>
            <person name="Kim M.C."/>
            <person name="Panstruga R."/>
            <person name="Elliott C."/>
            <person name="Mueller J."/>
            <person name="Devoto A."/>
            <person name="Yoon H.W."/>
            <person name="Park H.C."/>
            <person name="Cho M.J."/>
            <person name="Schulze-Lefert P."/>
        </authorList>
    </citation>
    <scope>INTERACTION WITH CALMODULIN</scope>
    <scope>MUTAGENESIS OF LEU-453 AND TRP-456</scope>
</reference>
<reference key="6">
    <citation type="journal article" date="2004" name="Mol. Cell. Proteomics">
        <title>Identification of new intrinsic proteins in Arabidopsis plasma membrane proteome.</title>
        <authorList>
            <person name="Marmagne A."/>
            <person name="Rouet M.-A."/>
            <person name="Ferro M."/>
            <person name="Rolland N."/>
            <person name="Alcon C."/>
            <person name="Joyard J."/>
            <person name="Garin J."/>
            <person name="Barbier-Brygoo H."/>
            <person name="Ephritikhine G."/>
        </authorList>
    </citation>
    <scope>IDENTIFICATION BY MASS SPECTROMETRY</scope>
    <scope>SUBCELLULAR LOCATION [LARGE SCALE ANALYSIS]</scope>
</reference>
<reference key="7">
    <citation type="journal article" date="2004" name="Plant Cell">
        <title>Phosphoproteomics of the Arabidopsis plasma membrane and a new phosphorylation site database.</title>
        <authorList>
            <person name="Nuehse T.S."/>
            <person name="Stensballe A."/>
            <person name="Jensen O.N."/>
            <person name="Peck S.C."/>
        </authorList>
    </citation>
    <scope>IDENTIFICATION BY MASS SPECTROMETRY [LARGE SCALE ANALYSIS]</scope>
</reference>